<protein>
    <recommendedName>
        <fullName evidence="1">Phospho-N-acetylmuramoyl-pentapeptide-transferase</fullName>
        <ecNumber evidence="1">2.7.8.13</ecNumber>
    </recommendedName>
    <alternativeName>
        <fullName evidence="1">UDP-MurNAc-pentapeptide phosphotransferase</fullName>
    </alternativeName>
</protein>
<keyword id="KW-0131">Cell cycle</keyword>
<keyword id="KW-0132">Cell division</keyword>
<keyword id="KW-0997">Cell inner membrane</keyword>
<keyword id="KW-1003">Cell membrane</keyword>
<keyword id="KW-0133">Cell shape</keyword>
<keyword id="KW-0961">Cell wall biogenesis/degradation</keyword>
<keyword id="KW-0460">Magnesium</keyword>
<keyword id="KW-0472">Membrane</keyword>
<keyword id="KW-0479">Metal-binding</keyword>
<keyword id="KW-0573">Peptidoglycan synthesis</keyword>
<keyword id="KW-1185">Reference proteome</keyword>
<keyword id="KW-0808">Transferase</keyword>
<keyword id="KW-0812">Transmembrane</keyword>
<keyword id="KW-1133">Transmembrane helix</keyword>
<proteinExistence type="inferred from homology"/>
<feature type="chain" id="PRO_1000116509" description="Phospho-N-acetylmuramoyl-pentapeptide-transferase">
    <location>
        <begin position="1"/>
        <end position="364"/>
    </location>
</feature>
<feature type="transmembrane region" description="Helical" evidence="1">
    <location>
        <begin position="18"/>
        <end position="38"/>
    </location>
</feature>
<feature type="transmembrane region" description="Helical" evidence="1">
    <location>
        <begin position="48"/>
        <end position="68"/>
    </location>
</feature>
<feature type="transmembrane region" description="Helical" evidence="1">
    <location>
        <begin position="91"/>
        <end position="111"/>
    </location>
</feature>
<feature type="transmembrane region" description="Helical" evidence="1">
    <location>
        <begin position="114"/>
        <end position="134"/>
    </location>
</feature>
<feature type="transmembrane region" description="Helical" evidence="1">
    <location>
        <begin position="154"/>
        <end position="174"/>
    </location>
</feature>
<feature type="transmembrane region" description="Helical" evidence="1">
    <location>
        <begin position="183"/>
        <end position="203"/>
    </location>
</feature>
<feature type="transmembrane region" description="Helical" evidence="1">
    <location>
        <begin position="214"/>
        <end position="234"/>
    </location>
</feature>
<feature type="transmembrane region" description="Helical" evidence="1">
    <location>
        <begin position="237"/>
        <end position="257"/>
    </location>
</feature>
<feature type="transmembrane region" description="Helical" evidence="1">
    <location>
        <begin position="280"/>
        <end position="300"/>
    </location>
</feature>
<feature type="transmembrane region" description="Helical" evidence="1">
    <location>
        <begin position="343"/>
        <end position="363"/>
    </location>
</feature>
<reference key="1">
    <citation type="journal article" date="2011" name="MBio">
        <title>Novel metabolic attributes of the genus Cyanothece, comprising a group of unicellular nitrogen-fixing Cyanobacteria.</title>
        <authorList>
            <person name="Bandyopadhyay A."/>
            <person name="Elvitigala T."/>
            <person name="Welsh E."/>
            <person name="Stockel J."/>
            <person name="Liberton M."/>
            <person name="Min H."/>
            <person name="Sherman L.A."/>
            <person name="Pakrasi H.B."/>
        </authorList>
    </citation>
    <scope>NUCLEOTIDE SEQUENCE [LARGE SCALE GENOMIC DNA]</scope>
    <source>
        <strain>PCC 8801 / RF-1</strain>
    </source>
</reference>
<organism>
    <name type="scientific">Rippkaea orientalis (strain PCC 8801 / RF-1)</name>
    <name type="common">Cyanothece sp. (strain PCC 8801)</name>
    <dbReference type="NCBI Taxonomy" id="41431"/>
    <lineage>
        <taxon>Bacteria</taxon>
        <taxon>Bacillati</taxon>
        <taxon>Cyanobacteriota</taxon>
        <taxon>Cyanophyceae</taxon>
        <taxon>Oscillatoriophycideae</taxon>
        <taxon>Chroococcales</taxon>
        <taxon>Aphanothecaceae</taxon>
        <taxon>Rippkaea</taxon>
        <taxon>Rippkaea orientalis</taxon>
    </lineage>
</organism>
<accession>B7JVF4</accession>
<dbReference type="EC" id="2.7.8.13" evidence="1"/>
<dbReference type="EMBL" id="CP001287">
    <property type="protein sequence ID" value="ACK68287.1"/>
    <property type="molecule type" value="Genomic_DNA"/>
</dbReference>
<dbReference type="RefSeq" id="WP_015785342.1">
    <property type="nucleotide sequence ID" value="NC_011726.1"/>
</dbReference>
<dbReference type="SMR" id="B7JVF4"/>
<dbReference type="STRING" id="41431.PCC8801_4365"/>
<dbReference type="KEGG" id="cyp:PCC8801_4365"/>
<dbReference type="eggNOG" id="COG0472">
    <property type="taxonomic scope" value="Bacteria"/>
</dbReference>
<dbReference type="HOGENOM" id="CLU_023982_0_2_3"/>
<dbReference type="OrthoDB" id="9805475at2"/>
<dbReference type="UniPathway" id="UPA00219"/>
<dbReference type="Proteomes" id="UP000008204">
    <property type="component" value="Chromosome"/>
</dbReference>
<dbReference type="GO" id="GO:0005886">
    <property type="term" value="C:plasma membrane"/>
    <property type="evidence" value="ECO:0007669"/>
    <property type="project" value="UniProtKB-SubCell"/>
</dbReference>
<dbReference type="GO" id="GO:0046872">
    <property type="term" value="F:metal ion binding"/>
    <property type="evidence" value="ECO:0007669"/>
    <property type="project" value="UniProtKB-KW"/>
</dbReference>
<dbReference type="GO" id="GO:0008963">
    <property type="term" value="F:phospho-N-acetylmuramoyl-pentapeptide-transferase activity"/>
    <property type="evidence" value="ECO:0007669"/>
    <property type="project" value="UniProtKB-UniRule"/>
</dbReference>
<dbReference type="GO" id="GO:0051992">
    <property type="term" value="F:UDP-N-acetylmuramoyl-L-alanyl-D-glutamyl-meso-2,6-diaminopimelyl-D-alanyl-D-alanine:undecaprenyl-phosphate transferase activity"/>
    <property type="evidence" value="ECO:0007669"/>
    <property type="project" value="RHEA"/>
</dbReference>
<dbReference type="GO" id="GO:0051301">
    <property type="term" value="P:cell division"/>
    <property type="evidence" value="ECO:0007669"/>
    <property type="project" value="UniProtKB-KW"/>
</dbReference>
<dbReference type="GO" id="GO:0071555">
    <property type="term" value="P:cell wall organization"/>
    <property type="evidence" value="ECO:0007669"/>
    <property type="project" value="UniProtKB-KW"/>
</dbReference>
<dbReference type="GO" id="GO:0009252">
    <property type="term" value="P:peptidoglycan biosynthetic process"/>
    <property type="evidence" value="ECO:0007669"/>
    <property type="project" value="UniProtKB-UniRule"/>
</dbReference>
<dbReference type="GO" id="GO:0008360">
    <property type="term" value="P:regulation of cell shape"/>
    <property type="evidence" value="ECO:0007669"/>
    <property type="project" value="UniProtKB-KW"/>
</dbReference>
<dbReference type="CDD" id="cd06852">
    <property type="entry name" value="GT_MraY"/>
    <property type="match status" value="1"/>
</dbReference>
<dbReference type="HAMAP" id="MF_00038">
    <property type="entry name" value="MraY"/>
    <property type="match status" value="1"/>
</dbReference>
<dbReference type="InterPro" id="IPR000715">
    <property type="entry name" value="Glycosyl_transferase_4"/>
</dbReference>
<dbReference type="InterPro" id="IPR003524">
    <property type="entry name" value="PNAcMuramoyl-5peptid_Trfase"/>
</dbReference>
<dbReference type="InterPro" id="IPR018480">
    <property type="entry name" value="PNAcMuramoyl-5peptid_Trfase_CS"/>
</dbReference>
<dbReference type="NCBIfam" id="TIGR00445">
    <property type="entry name" value="mraY"/>
    <property type="match status" value="1"/>
</dbReference>
<dbReference type="PANTHER" id="PTHR22926">
    <property type="entry name" value="PHOSPHO-N-ACETYLMURAMOYL-PENTAPEPTIDE-TRANSFERASE"/>
    <property type="match status" value="1"/>
</dbReference>
<dbReference type="PANTHER" id="PTHR22926:SF5">
    <property type="entry name" value="PHOSPHO-N-ACETYLMURAMOYL-PENTAPEPTIDE-TRANSFERASE HOMOLOG"/>
    <property type="match status" value="1"/>
</dbReference>
<dbReference type="Pfam" id="PF00953">
    <property type="entry name" value="Glycos_transf_4"/>
    <property type="match status" value="1"/>
</dbReference>
<dbReference type="Pfam" id="PF10555">
    <property type="entry name" value="MraY_sig1"/>
    <property type="match status" value="1"/>
</dbReference>
<dbReference type="PROSITE" id="PS01347">
    <property type="entry name" value="MRAY_1"/>
    <property type="match status" value="1"/>
</dbReference>
<dbReference type="PROSITE" id="PS01348">
    <property type="entry name" value="MRAY_2"/>
    <property type="match status" value="1"/>
</dbReference>
<name>MRAY_RIPO1</name>
<comment type="function">
    <text evidence="1">Catalyzes the initial step of the lipid cycle reactions in the biosynthesis of the cell wall peptidoglycan: transfers peptidoglycan precursor phospho-MurNAc-pentapeptide from UDP-MurNAc-pentapeptide onto the lipid carrier undecaprenyl phosphate, yielding undecaprenyl-pyrophosphoryl-MurNAc-pentapeptide, known as lipid I.</text>
</comment>
<comment type="catalytic activity">
    <reaction evidence="1">
        <text>UDP-N-acetyl-alpha-D-muramoyl-L-alanyl-gamma-D-glutamyl-meso-2,6-diaminopimeloyl-D-alanyl-D-alanine + di-trans,octa-cis-undecaprenyl phosphate = di-trans,octa-cis-undecaprenyl diphospho-N-acetyl-alpha-D-muramoyl-L-alanyl-D-glutamyl-meso-2,6-diaminopimeloyl-D-alanyl-D-alanine + UMP</text>
        <dbReference type="Rhea" id="RHEA:28386"/>
        <dbReference type="ChEBI" id="CHEBI:57865"/>
        <dbReference type="ChEBI" id="CHEBI:60392"/>
        <dbReference type="ChEBI" id="CHEBI:61386"/>
        <dbReference type="ChEBI" id="CHEBI:61387"/>
        <dbReference type="EC" id="2.7.8.13"/>
    </reaction>
</comment>
<comment type="cofactor">
    <cofactor evidence="1">
        <name>Mg(2+)</name>
        <dbReference type="ChEBI" id="CHEBI:18420"/>
    </cofactor>
</comment>
<comment type="pathway">
    <text evidence="1">Cell wall biogenesis; peptidoglycan biosynthesis.</text>
</comment>
<comment type="subcellular location">
    <subcellularLocation>
        <location evidence="1">Cell inner membrane</location>
        <topology evidence="1">Multi-pass membrane protein</topology>
    </subcellularLocation>
</comment>
<comment type="similarity">
    <text evidence="1">Belongs to the glycosyltransferase 4 family. MraY subfamily.</text>
</comment>
<sequence>MDAKIPPLTPFKKPSGTSLLILLILLLGLLCLGFAQILDLSSISLSLLFPLAVSAICSAILGYVVVPVLRRLKAGQVIQEDGPQTHLKKAGTPTMGGIFFVPVAVIIALIWSKLDPAVLAVSIVTLAYMGIGWIDDWQILRQKSNKGLTPRMKLILQIAIAVGFCIWTFLTQSADLTNIALPGQIILPLGLFFWIIAGFVLVAESNATNLTDGVDGLAGGTGSLAFLGLAALMASNNPGLMIFCACMSGGCLGFIVHNRNPATVFMGDTGSLALGGSLGAIGILSGHVWGLFLVSGIFFVESLSVIAQVSYYKATKGPDGKGKRLLKMAPLHHHLELSGWAETQIVGLFYLINAGLAVLAVISS</sequence>
<evidence type="ECO:0000255" key="1">
    <source>
        <dbReference type="HAMAP-Rule" id="MF_00038"/>
    </source>
</evidence>
<gene>
    <name evidence="1" type="primary">mraY</name>
    <name type="ordered locus">PCC8801_4365</name>
</gene>